<sequence length="230" mass="25394">MGQQISSQTQTVMNKLPEKVAKHASLVQESGFLTYEEFLGRVAELNDVTAKLASGQEKHLLFEVQPGSDSSAFWKVVVRIICTKINKTSGIVEASRILNLYQFVQLYKDITSQAAGVLAQSETSEEAAESLTSVSSSQASLWMGRLKQPTDEDECCICMDGRVDLILPCAHSFCQKCIDKWSDRHRSCPVCRRQVTGAGDSWVVSDAPTEDDIATYILNMVDEVGQPLRP</sequence>
<accession>Q5ZM74</accession>
<evidence type="ECO:0000255" key="1">
    <source>
        <dbReference type="PROSITE-ProRule" id="PRU00175"/>
    </source>
</evidence>
<feature type="chain" id="PRO_0000056105" description="RING finger protein 141">
    <location>
        <begin position="1"/>
        <end position="230"/>
    </location>
</feature>
<feature type="zinc finger region" description="RING-type" evidence="1">
    <location>
        <begin position="154"/>
        <end position="191"/>
    </location>
</feature>
<gene>
    <name type="primary">RNF141</name>
    <name type="ORF">RCJMB04_2p1</name>
</gene>
<reference key="1">
    <citation type="journal article" date="2005" name="Genome Biol.">
        <title>Full-length cDNAs from chicken bursal lymphocytes to facilitate gene function analysis.</title>
        <authorList>
            <person name="Caldwell R.B."/>
            <person name="Kierzek A.M."/>
            <person name="Arakawa H."/>
            <person name="Bezzubov Y."/>
            <person name="Zaim J."/>
            <person name="Fiedler P."/>
            <person name="Kutter S."/>
            <person name="Blagodatski A."/>
            <person name="Kostovska D."/>
            <person name="Koter M."/>
            <person name="Plachy J."/>
            <person name="Carninci P."/>
            <person name="Hayashizaki Y."/>
            <person name="Buerstedde J.-M."/>
        </authorList>
    </citation>
    <scope>NUCLEOTIDE SEQUENCE [LARGE SCALE MRNA]</scope>
    <source>
        <strain>CB</strain>
        <tissue>Bursa of Fabricius</tissue>
    </source>
</reference>
<name>RN141_CHICK</name>
<dbReference type="EMBL" id="AJ719510">
    <property type="protein sequence ID" value="CAG31169.1"/>
    <property type="molecule type" value="mRNA"/>
</dbReference>
<dbReference type="RefSeq" id="NP_001007926.1">
    <property type="nucleotide sequence ID" value="NM_001007925.2"/>
</dbReference>
<dbReference type="RefSeq" id="XP_015141861.1">
    <property type="nucleotide sequence ID" value="XM_015286375.4"/>
</dbReference>
<dbReference type="RefSeq" id="XP_040556759.1">
    <property type="nucleotide sequence ID" value="XM_040700825.2"/>
</dbReference>
<dbReference type="RefSeq" id="XP_040556760.1">
    <property type="nucleotide sequence ID" value="XM_040700826.2"/>
</dbReference>
<dbReference type="RefSeq" id="XP_040556762.1">
    <property type="nucleotide sequence ID" value="XM_040700828.2"/>
</dbReference>
<dbReference type="RefSeq" id="XP_046774114.1">
    <property type="nucleotide sequence ID" value="XM_046918158.1"/>
</dbReference>
<dbReference type="RefSeq" id="XP_046774115.1">
    <property type="nucleotide sequence ID" value="XM_046918159.1"/>
</dbReference>
<dbReference type="RefSeq" id="XP_046774116.1">
    <property type="nucleotide sequence ID" value="XM_046918160.1"/>
</dbReference>
<dbReference type="RefSeq" id="XP_046774117.1">
    <property type="nucleotide sequence ID" value="XM_046918161.1"/>
</dbReference>
<dbReference type="RefSeq" id="XP_046774118.1">
    <property type="nucleotide sequence ID" value="XM_046918162.1"/>
</dbReference>
<dbReference type="RefSeq" id="XP_046774119.1">
    <property type="nucleotide sequence ID" value="XM_046918163.1"/>
</dbReference>
<dbReference type="RefSeq" id="XP_046774120.1">
    <property type="nucleotide sequence ID" value="XM_046918164.1"/>
</dbReference>
<dbReference type="RefSeq" id="XP_046774121.1">
    <property type="nucleotide sequence ID" value="XM_046918165.1"/>
</dbReference>
<dbReference type="RefSeq" id="XP_046797562.1">
    <property type="nucleotide sequence ID" value="XM_046941606.1"/>
</dbReference>
<dbReference type="RefSeq" id="XP_046797563.1">
    <property type="nucleotide sequence ID" value="XM_046941607.1"/>
</dbReference>
<dbReference type="FunCoup" id="Q5ZM74">
    <property type="interactions" value="928"/>
</dbReference>
<dbReference type="STRING" id="9031.ENSGALP00000052701"/>
<dbReference type="PaxDb" id="9031-ENSGALP00000009040"/>
<dbReference type="GeneID" id="423039"/>
<dbReference type="KEGG" id="gga:423039"/>
<dbReference type="CTD" id="50862"/>
<dbReference type="VEuPathDB" id="HostDB:geneid_423039"/>
<dbReference type="eggNOG" id="KOG1039">
    <property type="taxonomic scope" value="Eukaryota"/>
</dbReference>
<dbReference type="HOGENOM" id="CLU_080007_0_0_1"/>
<dbReference type="InParanoid" id="Q5ZM74"/>
<dbReference type="OMA" id="RHRNCPV"/>
<dbReference type="OrthoDB" id="1630758at2759"/>
<dbReference type="PhylomeDB" id="Q5ZM74"/>
<dbReference type="TreeFam" id="TF323284"/>
<dbReference type="PRO" id="PR:Q5ZM74"/>
<dbReference type="Proteomes" id="UP000000539">
    <property type="component" value="Chromosome 5"/>
</dbReference>
<dbReference type="Bgee" id="ENSGALG00000029586">
    <property type="expression patterns" value="Expressed in cerebellum and 13 other cell types or tissues"/>
</dbReference>
<dbReference type="GO" id="GO:0004842">
    <property type="term" value="F:ubiquitin-protein transferase activity"/>
    <property type="evidence" value="ECO:0000318"/>
    <property type="project" value="GO_Central"/>
</dbReference>
<dbReference type="GO" id="GO:0008270">
    <property type="term" value="F:zinc ion binding"/>
    <property type="evidence" value="ECO:0007669"/>
    <property type="project" value="UniProtKB-KW"/>
</dbReference>
<dbReference type="GO" id="GO:0051865">
    <property type="term" value="P:protein autoubiquitination"/>
    <property type="evidence" value="ECO:0000318"/>
    <property type="project" value="GO_Central"/>
</dbReference>
<dbReference type="CDD" id="cd16545">
    <property type="entry name" value="RING-HC_RNF141"/>
    <property type="match status" value="1"/>
</dbReference>
<dbReference type="Gene3D" id="3.30.40.10">
    <property type="entry name" value="Zinc/RING finger domain, C3HC4 (zinc finger)"/>
    <property type="match status" value="1"/>
</dbReference>
<dbReference type="InterPro" id="IPR043400">
    <property type="entry name" value="RING-HC_RNF141"/>
</dbReference>
<dbReference type="InterPro" id="IPR047126">
    <property type="entry name" value="RNF141-like"/>
</dbReference>
<dbReference type="InterPro" id="IPR001841">
    <property type="entry name" value="Znf_RING"/>
</dbReference>
<dbReference type="InterPro" id="IPR013083">
    <property type="entry name" value="Znf_RING/FYVE/PHD"/>
</dbReference>
<dbReference type="InterPro" id="IPR017907">
    <property type="entry name" value="Znf_RING_CS"/>
</dbReference>
<dbReference type="PANTHER" id="PTHR12109:SF3">
    <property type="entry name" value="RING FINGER PROTEIN 141"/>
    <property type="match status" value="1"/>
</dbReference>
<dbReference type="PANTHER" id="PTHR12109">
    <property type="entry name" value="RING FINGER PROTEIN 141-RELATED"/>
    <property type="match status" value="1"/>
</dbReference>
<dbReference type="Pfam" id="PF13920">
    <property type="entry name" value="zf-C3HC4_3"/>
    <property type="match status" value="1"/>
</dbReference>
<dbReference type="SMART" id="SM00184">
    <property type="entry name" value="RING"/>
    <property type="match status" value="1"/>
</dbReference>
<dbReference type="SUPFAM" id="SSF57850">
    <property type="entry name" value="RING/U-box"/>
    <property type="match status" value="1"/>
</dbReference>
<dbReference type="PROSITE" id="PS00518">
    <property type="entry name" value="ZF_RING_1"/>
    <property type="match status" value="1"/>
</dbReference>
<dbReference type="PROSITE" id="PS50089">
    <property type="entry name" value="ZF_RING_2"/>
    <property type="match status" value="1"/>
</dbReference>
<organism>
    <name type="scientific">Gallus gallus</name>
    <name type="common">Chicken</name>
    <dbReference type="NCBI Taxonomy" id="9031"/>
    <lineage>
        <taxon>Eukaryota</taxon>
        <taxon>Metazoa</taxon>
        <taxon>Chordata</taxon>
        <taxon>Craniata</taxon>
        <taxon>Vertebrata</taxon>
        <taxon>Euteleostomi</taxon>
        <taxon>Archelosauria</taxon>
        <taxon>Archosauria</taxon>
        <taxon>Dinosauria</taxon>
        <taxon>Saurischia</taxon>
        <taxon>Theropoda</taxon>
        <taxon>Coelurosauria</taxon>
        <taxon>Aves</taxon>
        <taxon>Neognathae</taxon>
        <taxon>Galloanserae</taxon>
        <taxon>Galliformes</taxon>
        <taxon>Phasianidae</taxon>
        <taxon>Phasianinae</taxon>
        <taxon>Gallus</taxon>
    </lineage>
</organism>
<keyword id="KW-0479">Metal-binding</keyword>
<keyword id="KW-1185">Reference proteome</keyword>
<keyword id="KW-0862">Zinc</keyword>
<keyword id="KW-0863">Zinc-finger</keyword>
<protein>
    <recommendedName>
        <fullName>RING finger protein 141</fullName>
    </recommendedName>
</protein>
<proteinExistence type="evidence at transcript level"/>